<sequence length="97" mass="10907">TKVDLTVEKGSDAKTLVLNIKYTRPGDTLAEVELRQHGSEEWEPMTKKGNLWEVKSAKPLTGPMNFRFLSKGGMKNVFDEVIPTAFTVGKTYTPEYN</sequence>
<evidence type="ECO:0000255" key="1">
    <source>
        <dbReference type="PROSITE-ProRule" id="PRU00078"/>
    </source>
</evidence>
<evidence type="ECO:0000269" key="2">
    <source>
    </source>
</evidence>
<evidence type="ECO:0000305" key="3"/>
<accession>P14948</accession>
<comment type="subcellular location">
    <subcellularLocation>
        <location>Secreted</location>
    </subcellularLocation>
</comment>
<comment type="allergen">
    <text evidence="2">Causes an allergic reaction in human. Causes grass pollen allergy. Binds to IgE.</text>
</comment>
<comment type="similarity">
    <text evidence="3">Belongs to the expansin family. Expansin B subfamily.</text>
</comment>
<organism>
    <name type="scientific">Lolium perenne</name>
    <name type="common">Perennial ryegrass</name>
    <dbReference type="NCBI Taxonomy" id="4522"/>
    <lineage>
        <taxon>Eukaryota</taxon>
        <taxon>Viridiplantae</taxon>
        <taxon>Streptophyta</taxon>
        <taxon>Embryophyta</taxon>
        <taxon>Tracheophyta</taxon>
        <taxon>Spermatophyta</taxon>
        <taxon>Magnoliopsida</taxon>
        <taxon>Liliopsida</taxon>
        <taxon>Poales</taxon>
        <taxon>Poaceae</taxon>
        <taxon>BOP clade</taxon>
        <taxon>Pooideae</taxon>
        <taxon>Poodae</taxon>
        <taxon>Poeae</taxon>
        <taxon>Poeae Chloroplast Group 2 (Poeae type)</taxon>
        <taxon>Loliodinae</taxon>
        <taxon>Loliinae</taxon>
        <taxon>Lolium</taxon>
    </lineage>
</organism>
<keyword id="KW-0020">Allergen</keyword>
<keyword id="KW-0903">Direct protein sequencing</keyword>
<keyword id="KW-0964">Secreted</keyword>
<proteinExistence type="evidence at protein level"/>
<feature type="chain" id="PRO_0000154573" description="Pollen allergen Lol p 3">
    <location>
        <begin position="1"/>
        <end position="97"/>
    </location>
</feature>
<feature type="domain" description="Expansin-like CBD" evidence="1">
    <location>
        <begin position="14"/>
        <end position="94"/>
    </location>
</feature>
<feature type="sequence variant">
    <original>T</original>
    <variation>M</variation>
    <location>
        <position position="6"/>
    </location>
</feature>
<reference key="1">
    <citation type="journal article" date="1989" name="Biochemistry">
        <title>Complete primary structure of a Lolium perenne (perennial rye grass) pollen allergen, Lol p III: comparison with known Lol p I and II sequences.</title>
        <authorList>
            <person name="Ansari A.A."/>
            <person name="Shenbagamurthi P."/>
            <person name="Marsh D.G."/>
        </authorList>
    </citation>
    <scope>PROTEIN SEQUENCE</scope>
    <scope>ALLERGEN</scope>
</reference>
<dbReference type="PIR" id="A33422">
    <property type="entry name" value="A33422"/>
</dbReference>
<dbReference type="SMR" id="P14948"/>
<dbReference type="Allergome" id="3356">
    <property type="allergen name" value="Lol p 3.0101"/>
</dbReference>
<dbReference type="Allergome" id="458">
    <property type="allergen name" value="Lol p 3"/>
</dbReference>
<dbReference type="GO" id="GO:0005576">
    <property type="term" value="C:extracellular region"/>
    <property type="evidence" value="ECO:0007669"/>
    <property type="project" value="UniProtKB-SubCell"/>
</dbReference>
<dbReference type="GO" id="GO:0009828">
    <property type="term" value="P:plant-type cell wall loosening"/>
    <property type="evidence" value="ECO:0000250"/>
    <property type="project" value="UniProtKB"/>
</dbReference>
<dbReference type="Gene3D" id="2.60.40.760">
    <property type="entry name" value="Expansin, cellulose-binding-like domain"/>
    <property type="match status" value="1"/>
</dbReference>
<dbReference type="InterPro" id="IPR005453">
    <property type="entry name" value="Allergen_Lolp2"/>
</dbReference>
<dbReference type="InterPro" id="IPR007117">
    <property type="entry name" value="Expansin_CBD"/>
</dbReference>
<dbReference type="InterPro" id="IPR036749">
    <property type="entry name" value="Expansin_CBD_sf"/>
</dbReference>
<dbReference type="PANTHER" id="PTHR31692">
    <property type="entry name" value="EXPANSIN-B3"/>
    <property type="match status" value="1"/>
</dbReference>
<dbReference type="PANTHER" id="PTHR31692:SF91">
    <property type="entry name" value="EXPANSIN-LIKE CBD DOMAIN-CONTAINING PROTEIN"/>
    <property type="match status" value="1"/>
</dbReference>
<dbReference type="Pfam" id="PF01357">
    <property type="entry name" value="Expansin_C"/>
    <property type="match status" value="1"/>
</dbReference>
<dbReference type="PRINTS" id="PR01637">
    <property type="entry name" value="LOLP2ALLERGN"/>
</dbReference>
<dbReference type="SUPFAM" id="SSF49590">
    <property type="entry name" value="PHL pollen allergen"/>
    <property type="match status" value="1"/>
</dbReference>
<dbReference type="PROSITE" id="PS50843">
    <property type="entry name" value="EXPANSIN_CBD"/>
    <property type="match status" value="1"/>
</dbReference>
<name>MPAL3_LOLPR</name>
<protein>
    <recommendedName>
        <fullName>Pollen allergen Lol p 3</fullName>
    </recommendedName>
    <alternativeName>
        <fullName>Allergen Lol p III</fullName>
    </alternativeName>
    <allergenName>Lol p 3</allergenName>
</protein>